<evidence type="ECO:0000255" key="1">
    <source>
        <dbReference type="PROSITE-ProRule" id="PRU00080"/>
    </source>
</evidence>
<evidence type="ECO:0000305" key="2"/>
<gene>
    <name type="ordered locus">At2g42720</name>
    <name type="ORF">F7D19.28</name>
</gene>
<reference key="1">
    <citation type="journal article" date="1999" name="Nature">
        <title>Sequence and analysis of chromosome 2 of the plant Arabidopsis thaliana.</title>
        <authorList>
            <person name="Lin X."/>
            <person name="Kaul S."/>
            <person name="Rounsley S.D."/>
            <person name="Shea T.P."/>
            <person name="Benito M.-I."/>
            <person name="Town C.D."/>
            <person name="Fujii C.Y."/>
            <person name="Mason T.M."/>
            <person name="Bowman C.L."/>
            <person name="Barnstead M.E."/>
            <person name="Feldblyum T.V."/>
            <person name="Buell C.R."/>
            <person name="Ketchum K.A."/>
            <person name="Lee J.J."/>
            <person name="Ronning C.M."/>
            <person name="Koo H.L."/>
            <person name="Moffat K.S."/>
            <person name="Cronin L.A."/>
            <person name="Shen M."/>
            <person name="Pai G."/>
            <person name="Van Aken S."/>
            <person name="Umayam L."/>
            <person name="Tallon L.J."/>
            <person name="Gill J.E."/>
            <person name="Adams M.D."/>
            <person name="Carrera A.J."/>
            <person name="Creasy T.H."/>
            <person name="Goodman H.M."/>
            <person name="Somerville C.R."/>
            <person name="Copenhaver G.P."/>
            <person name="Preuss D."/>
            <person name="Nierman W.C."/>
            <person name="White O."/>
            <person name="Eisen J.A."/>
            <person name="Salzberg S.L."/>
            <person name="Fraser C.M."/>
            <person name="Venter J.C."/>
        </authorList>
    </citation>
    <scope>NUCLEOTIDE SEQUENCE [LARGE SCALE GENOMIC DNA]</scope>
    <source>
        <strain>cv. Columbia</strain>
    </source>
</reference>
<reference key="2">
    <citation type="journal article" date="2017" name="Plant J.">
        <title>Araport11: a complete reannotation of the Arabidopsis thaliana reference genome.</title>
        <authorList>
            <person name="Cheng C.Y."/>
            <person name="Krishnakumar V."/>
            <person name="Chan A.P."/>
            <person name="Thibaud-Nissen F."/>
            <person name="Schobel S."/>
            <person name="Town C.D."/>
        </authorList>
    </citation>
    <scope>GENOME REANNOTATION</scope>
    <source>
        <strain>cv. Columbia</strain>
    </source>
</reference>
<reference key="3">
    <citation type="journal article" date="2005" name="Plant Physiol.">
        <title>Analysis of the cDNAs of hypothetical genes on Arabidopsis chromosome 2 reveals numerous transcript variants.</title>
        <authorList>
            <person name="Xiao Y.-L."/>
            <person name="Smith S.R."/>
            <person name="Ishmael N."/>
            <person name="Redman J.C."/>
            <person name="Kumar N."/>
            <person name="Monaghan E.L."/>
            <person name="Ayele M."/>
            <person name="Haas B.J."/>
            <person name="Wu H.C."/>
            <person name="Town C.D."/>
        </authorList>
    </citation>
    <scope>NUCLEOTIDE SEQUENCE [LARGE SCALE MRNA]</scope>
    <source>
        <strain>cv. Columbia</strain>
    </source>
</reference>
<reference key="4">
    <citation type="submission" date="2004-06" db="EMBL/GenBank/DDBJ databases">
        <title>Arabidopsis thaliana ORF clones of hypothetical genes.</title>
        <authorList>
            <person name="Underwood B.A."/>
            <person name="Xiao Y.-L."/>
            <person name="Moskal W.A. Jr."/>
            <person name="Monaghan E.L."/>
            <person name="Wang W."/>
            <person name="Redman J.C."/>
            <person name="Wu H.C."/>
            <person name="Utterback T."/>
            <person name="Town C.D."/>
        </authorList>
    </citation>
    <scope>NUCLEOTIDE SEQUENCE [LARGE SCALE MRNA]</scope>
    <source>
        <strain>cv. Columbia</strain>
    </source>
</reference>
<organism>
    <name type="scientific">Arabidopsis thaliana</name>
    <name type="common">Mouse-ear cress</name>
    <dbReference type="NCBI Taxonomy" id="3702"/>
    <lineage>
        <taxon>Eukaryota</taxon>
        <taxon>Viridiplantae</taxon>
        <taxon>Streptophyta</taxon>
        <taxon>Embryophyta</taxon>
        <taxon>Tracheophyta</taxon>
        <taxon>Spermatophyta</taxon>
        <taxon>Magnoliopsida</taxon>
        <taxon>eudicotyledons</taxon>
        <taxon>Gunneridae</taxon>
        <taxon>Pentapetalae</taxon>
        <taxon>rosids</taxon>
        <taxon>malvids</taxon>
        <taxon>Brassicales</taxon>
        <taxon>Brassicaceae</taxon>
        <taxon>Camelineae</taxon>
        <taxon>Arabidopsis</taxon>
    </lineage>
</organism>
<protein>
    <recommendedName>
        <fullName>F-box/LRR-repeat protein At2g42720</fullName>
    </recommendedName>
</protein>
<keyword id="KW-0433">Leucine-rich repeat</keyword>
<keyword id="KW-1185">Reference proteome</keyword>
<keyword id="KW-0677">Repeat</keyword>
<feature type="chain" id="PRO_0000281939" description="F-box/LRR-repeat protein At2g42720">
    <location>
        <begin position="1"/>
        <end position="443"/>
    </location>
</feature>
<feature type="domain" description="F-box" evidence="1">
    <location>
        <begin position="1"/>
        <end position="47"/>
    </location>
</feature>
<feature type="repeat" description="LRR 1">
    <location>
        <begin position="139"/>
        <end position="167"/>
    </location>
</feature>
<feature type="repeat" description="LRR 2">
    <location>
        <begin position="169"/>
        <end position="194"/>
    </location>
</feature>
<feature type="repeat" description="LRR 3">
    <location>
        <begin position="201"/>
        <end position="236"/>
    </location>
</feature>
<feature type="repeat" description="LRR 4">
    <location>
        <begin position="271"/>
        <end position="296"/>
    </location>
</feature>
<feature type="repeat" description="LRR 5">
    <location>
        <begin position="323"/>
        <end position="348"/>
    </location>
</feature>
<feature type="repeat" description="LRR 6">
    <location>
        <begin position="363"/>
        <end position="389"/>
    </location>
</feature>
<feature type="sequence conflict" description="In Ref. 3; AAN08449." evidence="2" ref="3">
    <original>R</original>
    <variation>K</variation>
    <location>
        <position position="141"/>
    </location>
</feature>
<feature type="sequence conflict" description="In Ref. 3; AAN08449." evidence="2" ref="3">
    <original>S</original>
    <variation>P</variation>
    <location>
        <position position="203"/>
    </location>
</feature>
<accession>Q6DR13</accession>
<accession>Q8H1M3</accession>
<accession>Q9SJI4</accession>
<sequence length="443" mass="50731">MDRISSLPDEILEHILSFLSTKEAALTSSLSTRWKNVFVFVPSLHLDYARQHENPREFIDFVDFVNTLFNRKGNSPIKKLALKIHLKDNQSLQNQTHVQSWIHRVLSRGGVTDLDLFITFKGKFQLVPLLIFKSNTLVKLRLGRGFTIKLCHENVYLPMLKTLCLDTVDFDGDHNVFETLLPRCPLLEELVLEDQRWKQWCGSVSSPSLKRLRIRFFHIPIISLDVPGLVYLELSCIFGSKYANVNLDSLVEARLNHWVEEQELRKLRDGSSHLVPADMMDLITGIRKVKVLHLTSDALELFYFSGQELPMFDNLVYLSIASDKKQGWQILPLLIKNSPNLETLVFKGLEHYTTKQCGDACVCSGILGKSSSCLSSSRVKVLEIWSYQGTSKELKQMGHFLMKLQFLELVKIRAVSNLQVPIDIQYLLKLPRASSNCKIQAIF</sequence>
<name>FBL38_ARATH</name>
<comment type="sequence caution" evidence="2">
    <conflict type="erroneous gene model prediction">
        <sequence resource="EMBL-CDS" id="AAD21743"/>
    </conflict>
</comment>
<proteinExistence type="evidence at transcript level"/>
<dbReference type="EMBL" id="AC006931">
    <property type="protein sequence ID" value="AAD21743.1"/>
    <property type="status" value="ALT_SEQ"/>
    <property type="molecule type" value="Genomic_DNA"/>
</dbReference>
<dbReference type="EMBL" id="CP002685">
    <property type="protein sequence ID" value="AEC10160.1"/>
    <property type="molecule type" value="Genomic_DNA"/>
</dbReference>
<dbReference type="EMBL" id="AY144114">
    <property type="protein sequence ID" value="AAN08449.1"/>
    <property type="molecule type" value="mRNA"/>
</dbReference>
<dbReference type="EMBL" id="AY649302">
    <property type="protein sequence ID" value="AAT69219.1"/>
    <property type="molecule type" value="mRNA"/>
</dbReference>
<dbReference type="PIR" id="D84857">
    <property type="entry name" value="D84857"/>
</dbReference>
<dbReference type="RefSeq" id="NP_181800.2">
    <property type="nucleotide sequence ID" value="NM_129833.4"/>
</dbReference>
<dbReference type="FunCoup" id="Q6DR13">
    <property type="interactions" value="6"/>
</dbReference>
<dbReference type="STRING" id="3702.Q6DR13"/>
<dbReference type="PaxDb" id="3702-AT2G42720.1"/>
<dbReference type="ProteomicsDB" id="230701"/>
<dbReference type="EnsemblPlants" id="AT2G42720.1">
    <property type="protein sequence ID" value="AT2G42720.1"/>
    <property type="gene ID" value="AT2G42720"/>
</dbReference>
<dbReference type="GeneID" id="818872"/>
<dbReference type="Gramene" id="AT2G42720.1">
    <property type="protein sequence ID" value="AT2G42720.1"/>
    <property type="gene ID" value="AT2G42720"/>
</dbReference>
<dbReference type="KEGG" id="ath:AT2G42720"/>
<dbReference type="Araport" id="AT2G42720"/>
<dbReference type="TAIR" id="AT2G42720"/>
<dbReference type="HOGENOM" id="CLU_010721_7_1_1"/>
<dbReference type="InParanoid" id="Q6DR13"/>
<dbReference type="OMA" id="LDCFRIR"/>
<dbReference type="PhylomeDB" id="Q6DR13"/>
<dbReference type="PRO" id="PR:Q6DR13"/>
<dbReference type="Proteomes" id="UP000006548">
    <property type="component" value="Chromosome 2"/>
</dbReference>
<dbReference type="ExpressionAtlas" id="Q6DR13">
    <property type="expression patterns" value="baseline and differential"/>
</dbReference>
<dbReference type="CDD" id="cd22160">
    <property type="entry name" value="F-box_AtFBL13-like"/>
    <property type="match status" value="1"/>
</dbReference>
<dbReference type="Gene3D" id="1.20.1280.50">
    <property type="match status" value="1"/>
</dbReference>
<dbReference type="Gene3D" id="3.80.10.10">
    <property type="entry name" value="Ribonuclease Inhibitor"/>
    <property type="match status" value="1"/>
</dbReference>
<dbReference type="InterPro" id="IPR036047">
    <property type="entry name" value="F-box-like_dom_sf"/>
</dbReference>
<dbReference type="InterPro" id="IPR053781">
    <property type="entry name" value="F-box_AtFBL13-like"/>
</dbReference>
<dbReference type="InterPro" id="IPR001810">
    <property type="entry name" value="F-box_dom"/>
</dbReference>
<dbReference type="InterPro" id="IPR006566">
    <property type="entry name" value="FBD"/>
</dbReference>
<dbReference type="InterPro" id="IPR055294">
    <property type="entry name" value="FBL60-like"/>
</dbReference>
<dbReference type="InterPro" id="IPR032675">
    <property type="entry name" value="LRR_dom_sf"/>
</dbReference>
<dbReference type="InterPro" id="IPR055411">
    <property type="entry name" value="LRR_FXL15/At3g58940/PEG3-like"/>
</dbReference>
<dbReference type="PANTHER" id="PTHR31293">
    <property type="entry name" value="RNI-LIKE SUPERFAMILY PROTEIN"/>
    <property type="match status" value="1"/>
</dbReference>
<dbReference type="PANTHER" id="PTHR31293:SF12">
    <property type="entry name" value="RNI-LIKE SUPERFAMILY PROTEIN"/>
    <property type="match status" value="1"/>
</dbReference>
<dbReference type="Pfam" id="PF00646">
    <property type="entry name" value="F-box"/>
    <property type="match status" value="1"/>
</dbReference>
<dbReference type="Pfam" id="PF24758">
    <property type="entry name" value="LRR_At5g56370"/>
    <property type="match status" value="1"/>
</dbReference>
<dbReference type="SMART" id="SM00579">
    <property type="entry name" value="FBD"/>
    <property type="match status" value="1"/>
</dbReference>
<dbReference type="SMART" id="SM00256">
    <property type="entry name" value="FBOX"/>
    <property type="match status" value="1"/>
</dbReference>
<dbReference type="SUPFAM" id="SSF81383">
    <property type="entry name" value="F-box domain"/>
    <property type="match status" value="1"/>
</dbReference>
<dbReference type="SUPFAM" id="SSF52047">
    <property type="entry name" value="RNI-like"/>
    <property type="match status" value="1"/>
</dbReference>
<dbReference type="PROSITE" id="PS50181">
    <property type="entry name" value="FBOX"/>
    <property type="match status" value="1"/>
</dbReference>